<protein>
    <recommendedName>
        <fullName evidence="1">Oligoribonuclease</fullName>
        <ecNumber evidence="1">3.1.15.-</ecNumber>
    </recommendedName>
</protein>
<keyword id="KW-0963">Cytoplasm</keyword>
<keyword id="KW-0269">Exonuclease</keyword>
<keyword id="KW-0378">Hydrolase</keyword>
<keyword id="KW-0540">Nuclease</keyword>
<organism>
    <name type="scientific">Burkholderia ambifaria (strain ATCC BAA-244 / DSM 16087 / CCUG 44356 / LMG 19182 / AMMD)</name>
    <name type="common">Burkholderia cepacia (strain AMMD)</name>
    <dbReference type="NCBI Taxonomy" id="339670"/>
    <lineage>
        <taxon>Bacteria</taxon>
        <taxon>Pseudomonadati</taxon>
        <taxon>Pseudomonadota</taxon>
        <taxon>Betaproteobacteria</taxon>
        <taxon>Burkholderiales</taxon>
        <taxon>Burkholderiaceae</taxon>
        <taxon>Burkholderia</taxon>
        <taxon>Burkholderia cepacia complex</taxon>
    </lineage>
</organism>
<accession>Q0BH60</accession>
<name>ORN_BURCM</name>
<evidence type="ECO:0000255" key="1">
    <source>
        <dbReference type="HAMAP-Rule" id="MF_00045"/>
    </source>
</evidence>
<feature type="chain" id="PRO_1000004234" description="Oligoribonuclease">
    <location>
        <begin position="1"/>
        <end position="206"/>
    </location>
</feature>
<feature type="domain" description="Exonuclease" evidence="1">
    <location>
        <begin position="20"/>
        <end position="183"/>
    </location>
</feature>
<feature type="active site" evidence="1">
    <location>
        <position position="141"/>
    </location>
</feature>
<comment type="function">
    <text evidence="1">3'-to-5' exoribonuclease specific for small oligoribonucleotides.</text>
</comment>
<comment type="subcellular location">
    <subcellularLocation>
        <location evidence="1">Cytoplasm</location>
    </subcellularLocation>
</comment>
<comment type="similarity">
    <text evidence="1">Belongs to the oligoribonuclease family.</text>
</comment>
<reference key="1">
    <citation type="submission" date="2006-08" db="EMBL/GenBank/DDBJ databases">
        <title>Complete sequence of chromosome 1 of Burkholderia cepacia AMMD.</title>
        <authorList>
            <person name="Copeland A."/>
            <person name="Lucas S."/>
            <person name="Lapidus A."/>
            <person name="Barry K."/>
            <person name="Detter J.C."/>
            <person name="Glavina del Rio T."/>
            <person name="Hammon N."/>
            <person name="Israni S."/>
            <person name="Pitluck S."/>
            <person name="Bruce D."/>
            <person name="Chain P."/>
            <person name="Malfatti S."/>
            <person name="Shin M."/>
            <person name="Vergez L."/>
            <person name="Schmutz J."/>
            <person name="Larimer F."/>
            <person name="Land M."/>
            <person name="Hauser L."/>
            <person name="Kyrpides N."/>
            <person name="Kim E."/>
            <person name="Parke J."/>
            <person name="Coenye T."/>
            <person name="Konstantinidis K."/>
            <person name="Ramette A."/>
            <person name="Tiedje J."/>
            <person name="Richardson P."/>
        </authorList>
    </citation>
    <scope>NUCLEOTIDE SEQUENCE [LARGE SCALE GENOMIC DNA]</scope>
    <source>
        <strain>ATCC BAA-244 / DSM 16087 / CCUG 44356 / LMG 19182 / AMMD</strain>
    </source>
</reference>
<gene>
    <name evidence="1" type="primary">orn</name>
    <name type="ordered locus">Bamb_0954</name>
</gene>
<proteinExistence type="inferred from homology"/>
<dbReference type="EC" id="3.1.15.-" evidence="1"/>
<dbReference type="EMBL" id="CP000440">
    <property type="protein sequence ID" value="ABI86513.1"/>
    <property type="molecule type" value="Genomic_DNA"/>
</dbReference>
<dbReference type="RefSeq" id="WP_011656304.1">
    <property type="nucleotide sequence ID" value="NZ_CP009798.1"/>
</dbReference>
<dbReference type="SMR" id="Q0BH60"/>
<dbReference type="GeneID" id="93083637"/>
<dbReference type="KEGG" id="bam:Bamb_0954"/>
<dbReference type="PATRIC" id="fig|339670.21.peg.620"/>
<dbReference type="eggNOG" id="COG1949">
    <property type="taxonomic scope" value="Bacteria"/>
</dbReference>
<dbReference type="Proteomes" id="UP000000662">
    <property type="component" value="Chromosome 1"/>
</dbReference>
<dbReference type="GO" id="GO:0005737">
    <property type="term" value="C:cytoplasm"/>
    <property type="evidence" value="ECO:0007669"/>
    <property type="project" value="UniProtKB-SubCell"/>
</dbReference>
<dbReference type="GO" id="GO:0000175">
    <property type="term" value="F:3'-5'-RNA exonuclease activity"/>
    <property type="evidence" value="ECO:0007669"/>
    <property type="project" value="InterPro"/>
</dbReference>
<dbReference type="GO" id="GO:0003676">
    <property type="term" value="F:nucleic acid binding"/>
    <property type="evidence" value="ECO:0007669"/>
    <property type="project" value="InterPro"/>
</dbReference>
<dbReference type="GO" id="GO:0006259">
    <property type="term" value="P:DNA metabolic process"/>
    <property type="evidence" value="ECO:0007669"/>
    <property type="project" value="UniProtKB-ARBA"/>
</dbReference>
<dbReference type="CDD" id="cd06135">
    <property type="entry name" value="Orn"/>
    <property type="match status" value="1"/>
</dbReference>
<dbReference type="FunFam" id="3.30.420.10:FF:000003">
    <property type="entry name" value="Oligoribonuclease"/>
    <property type="match status" value="1"/>
</dbReference>
<dbReference type="Gene3D" id="3.30.420.10">
    <property type="entry name" value="Ribonuclease H-like superfamily/Ribonuclease H"/>
    <property type="match status" value="1"/>
</dbReference>
<dbReference type="HAMAP" id="MF_00045">
    <property type="entry name" value="Oligoribonuclease"/>
    <property type="match status" value="1"/>
</dbReference>
<dbReference type="InterPro" id="IPR013520">
    <property type="entry name" value="Exonuclease_RNaseT/DNA_pol3"/>
</dbReference>
<dbReference type="InterPro" id="IPR022894">
    <property type="entry name" value="Oligoribonuclease"/>
</dbReference>
<dbReference type="InterPro" id="IPR012337">
    <property type="entry name" value="RNaseH-like_sf"/>
</dbReference>
<dbReference type="InterPro" id="IPR036397">
    <property type="entry name" value="RNaseH_sf"/>
</dbReference>
<dbReference type="NCBIfam" id="NF003765">
    <property type="entry name" value="PRK05359.1"/>
    <property type="match status" value="1"/>
</dbReference>
<dbReference type="PANTHER" id="PTHR11046">
    <property type="entry name" value="OLIGORIBONUCLEASE, MITOCHONDRIAL"/>
    <property type="match status" value="1"/>
</dbReference>
<dbReference type="PANTHER" id="PTHR11046:SF0">
    <property type="entry name" value="OLIGORIBONUCLEASE, MITOCHONDRIAL"/>
    <property type="match status" value="1"/>
</dbReference>
<dbReference type="Pfam" id="PF00929">
    <property type="entry name" value="RNase_T"/>
    <property type="match status" value="1"/>
</dbReference>
<dbReference type="SMART" id="SM00479">
    <property type="entry name" value="EXOIII"/>
    <property type="match status" value="1"/>
</dbReference>
<dbReference type="SUPFAM" id="SSF53098">
    <property type="entry name" value="Ribonuclease H-like"/>
    <property type="match status" value="1"/>
</dbReference>
<sequence>MTDTAASASQPALVRNELNLVWLDMEMTGLDPDNDRIIEIAVVVTNSTLDIAVEGPVFAIHQSDETLAKMDDWNKSTHGRSGLIDRVRASTVTEADAAAQLQAFLAQYVSPGKSPMCGNSICQDRRFMARWMPEFERFFHYRNLDVSTLKELCRRWQPAIYKGFQKRAMHTALADIHESIDELKYYRQHFLIPAASAPAGESAPAA</sequence>